<dbReference type="EC" id="3.1.-.-" evidence="1"/>
<dbReference type="EMBL" id="CP000449">
    <property type="protein sequence ID" value="ABI67316.1"/>
    <property type="molecule type" value="Genomic_DNA"/>
</dbReference>
<dbReference type="RefSeq" id="WP_011644960.1">
    <property type="nucleotide sequence ID" value="NC_008347.1"/>
</dbReference>
<dbReference type="SMR" id="Q0AK77"/>
<dbReference type="STRING" id="394221.Mmar10_3035"/>
<dbReference type="KEGG" id="mmr:Mmar10_3035"/>
<dbReference type="eggNOG" id="COG0319">
    <property type="taxonomic scope" value="Bacteria"/>
</dbReference>
<dbReference type="HOGENOM" id="CLU_106710_0_0_5"/>
<dbReference type="OrthoDB" id="9807740at2"/>
<dbReference type="Proteomes" id="UP000001964">
    <property type="component" value="Chromosome"/>
</dbReference>
<dbReference type="GO" id="GO:0005737">
    <property type="term" value="C:cytoplasm"/>
    <property type="evidence" value="ECO:0007669"/>
    <property type="project" value="UniProtKB-SubCell"/>
</dbReference>
<dbReference type="GO" id="GO:0004222">
    <property type="term" value="F:metalloendopeptidase activity"/>
    <property type="evidence" value="ECO:0007669"/>
    <property type="project" value="InterPro"/>
</dbReference>
<dbReference type="GO" id="GO:0004521">
    <property type="term" value="F:RNA endonuclease activity"/>
    <property type="evidence" value="ECO:0007669"/>
    <property type="project" value="UniProtKB-UniRule"/>
</dbReference>
<dbReference type="GO" id="GO:0008270">
    <property type="term" value="F:zinc ion binding"/>
    <property type="evidence" value="ECO:0007669"/>
    <property type="project" value="UniProtKB-UniRule"/>
</dbReference>
<dbReference type="GO" id="GO:0006364">
    <property type="term" value="P:rRNA processing"/>
    <property type="evidence" value="ECO:0007669"/>
    <property type="project" value="UniProtKB-UniRule"/>
</dbReference>
<dbReference type="Gene3D" id="3.40.390.30">
    <property type="entry name" value="Metalloproteases ('zincins'), catalytic domain"/>
    <property type="match status" value="1"/>
</dbReference>
<dbReference type="HAMAP" id="MF_00009">
    <property type="entry name" value="Endoribonucl_YbeY"/>
    <property type="match status" value="1"/>
</dbReference>
<dbReference type="InterPro" id="IPR023091">
    <property type="entry name" value="MetalPrtase_cat_dom_sf_prd"/>
</dbReference>
<dbReference type="InterPro" id="IPR002036">
    <property type="entry name" value="YbeY"/>
</dbReference>
<dbReference type="InterPro" id="IPR020549">
    <property type="entry name" value="YbeY_CS"/>
</dbReference>
<dbReference type="NCBIfam" id="TIGR00043">
    <property type="entry name" value="rRNA maturation RNase YbeY"/>
    <property type="match status" value="1"/>
</dbReference>
<dbReference type="PANTHER" id="PTHR46986">
    <property type="entry name" value="ENDORIBONUCLEASE YBEY, CHLOROPLASTIC"/>
    <property type="match status" value="1"/>
</dbReference>
<dbReference type="PANTHER" id="PTHR46986:SF1">
    <property type="entry name" value="ENDORIBONUCLEASE YBEY, CHLOROPLASTIC"/>
    <property type="match status" value="1"/>
</dbReference>
<dbReference type="Pfam" id="PF02130">
    <property type="entry name" value="YbeY"/>
    <property type="match status" value="1"/>
</dbReference>
<dbReference type="SUPFAM" id="SSF55486">
    <property type="entry name" value="Metalloproteases ('zincins'), catalytic domain"/>
    <property type="match status" value="1"/>
</dbReference>
<dbReference type="PROSITE" id="PS01306">
    <property type="entry name" value="UPF0054"/>
    <property type="match status" value="1"/>
</dbReference>
<sequence>MNAVDLIVEDDAWSSLAGKTRLVEEAISAACKELPDRTPGVVAILLGGDEGVASMNAQFRGKAGATNVLSFPAGEHADNHLGDIALAHGVIQREAEDRDIALADHLRHLIIHGFLHLQGFDHQQDDEAEVMEAIERRALARLGVADPYPNEDPGPGPHSE</sequence>
<gene>
    <name evidence="1" type="primary">ybeY</name>
    <name type="ordered locus">Mmar10_3035</name>
</gene>
<organism>
    <name type="scientific">Maricaulis maris (strain MCS10)</name>
    <name type="common">Caulobacter maris</name>
    <dbReference type="NCBI Taxonomy" id="394221"/>
    <lineage>
        <taxon>Bacteria</taxon>
        <taxon>Pseudomonadati</taxon>
        <taxon>Pseudomonadota</taxon>
        <taxon>Alphaproteobacteria</taxon>
        <taxon>Maricaulales</taxon>
        <taxon>Maricaulaceae</taxon>
        <taxon>Maricaulis</taxon>
    </lineage>
</organism>
<protein>
    <recommendedName>
        <fullName evidence="1">Endoribonuclease YbeY</fullName>
        <ecNumber evidence="1">3.1.-.-</ecNumber>
    </recommendedName>
</protein>
<feature type="chain" id="PRO_0000284238" description="Endoribonuclease YbeY">
    <location>
        <begin position="1"/>
        <end position="160"/>
    </location>
</feature>
<feature type="binding site" evidence="1">
    <location>
        <position position="112"/>
    </location>
    <ligand>
        <name>Zn(2+)</name>
        <dbReference type="ChEBI" id="CHEBI:29105"/>
        <note>catalytic</note>
    </ligand>
</feature>
<feature type="binding site" evidence="1">
    <location>
        <position position="116"/>
    </location>
    <ligand>
        <name>Zn(2+)</name>
        <dbReference type="ChEBI" id="CHEBI:29105"/>
        <note>catalytic</note>
    </ligand>
</feature>
<feature type="binding site" evidence="1">
    <location>
        <position position="122"/>
    </location>
    <ligand>
        <name>Zn(2+)</name>
        <dbReference type="ChEBI" id="CHEBI:29105"/>
        <note>catalytic</note>
    </ligand>
</feature>
<reference key="1">
    <citation type="submission" date="2006-08" db="EMBL/GenBank/DDBJ databases">
        <title>Complete sequence of Maricaulis maris MCS10.</title>
        <authorList>
            <consortium name="US DOE Joint Genome Institute"/>
            <person name="Copeland A."/>
            <person name="Lucas S."/>
            <person name="Lapidus A."/>
            <person name="Barry K."/>
            <person name="Detter J.C."/>
            <person name="Glavina del Rio T."/>
            <person name="Hammon N."/>
            <person name="Israni S."/>
            <person name="Dalin E."/>
            <person name="Tice H."/>
            <person name="Pitluck S."/>
            <person name="Saunders E."/>
            <person name="Brettin T."/>
            <person name="Bruce D."/>
            <person name="Han C."/>
            <person name="Tapia R."/>
            <person name="Gilna P."/>
            <person name="Schmutz J."/>
            <person name="Larimer F."/>
            <person name="Land M."/>
            <person name="Hauser L."/>
            <person name="Kyrpides N."/>
            <person name="Mikhailova N."/>
            <person name="Viollier P."/>
            <person name="Stephens C."/>
            <person name="Richardson P."/>
        </authorList>
    </citation>
    <scope>NUCLEOTIDE SEQUENCE [LARGE SCALE GENOMIC DNA]</scope>
    <source>
        <strain>MCS10</strain>
    </source>
</reference>
<proteinExistence type="inferred from homology"/>
<comment type="function">
    <text evidence="1">Single strand-specific metallo-endoribonuclease involved in late-stage 70S ribosome quality control and in maturation of the 3' terminus of the 16S rRNA.</text>
</comment>
<comment type="cofactor">
    <cofactor evidence="1">
        <name>Zn(2+)</name>
        <dbReference type="ChEBI" id="CHEBI:29105"/>
    </cofactor>
    <text evidence="1">Binds 1 zinc ion.</text>
</comment>
<comment type="subcellular location">
    <subcellularLocation>
        <location evidence="1">Cytoplasm</location>
    </subcellularLocation>
</comment>
<comment type="similarity">
    <text evidence="1">Belongs to the endoribonuclease YbeY family.</text>
</comment>
<name>YBEY_MARMM</name>
<keyword id="KW-0963">Cytoplasm</keyword>
<keyword id="KW-0255">Endonuclease</keyword>
<keyword id="KW-0378">Hydrolase</keyword>
<keyword id="KW-0479">Metal-binding</keyword>
<keyword id="KW-0540">Nuclease</keyword>
<keyword id="KW-1185">Reference proteome</keyword>
<keyword id="KW-0690">Ribosome biogenesis</keyword>
<keyword id="KW-0698">rRNA processing</keyword>
<keyword id="KW-0862">Zinc</keyword>
<accession>Q0AK77</accession>
<evidence type="ECO:0000255" key="1">
    <source>
        <dbReference type="HAMAP-Rule" id="MF_00009"/>
    </source>
</evidence>